<name>TGT_CHLCV</name>
<organism>
    <name type="scientific">Chlamydia caviae (strain ATCC VR-813 / DSM 19441 / 03DC25 / GPIC)</name>
    <name type="common">Chlamydophila caviae</name>
    <dbReference type="NCBI Taxonomy" id="227941"/>
    <lineage>
        <taxon>Bacteria</taxon>
        <taxon>Pseudomonadati</taxon>
        <taxon>Chlamydiota</taxon>
        <taxon>Chlamydiia</taxon>
        <taxon>Chlamydiales</taxon>
        <taxon>Chlamydiaceae</taxon>
        <taxon>Chlamydia/Chlamydophila group</taxon>
        <taxon>Chlamydia</taxon>
    </lineage>
</organism>
<comment type="function">
    <text evidence="1">Catalyzes the base-exchange of a guanine (G) residue with the queuine precursor 7-aminomethyl-7-deazaguanine (PreQ1) at position 34 (anticodon wobble position) in tRNAs with GU(N) anticodons (tRNA-Asp, -Asn, -His and -Tyr). Catalysis occurs through a double-displacement mechanism. The nucleophile active site attacks the C1' of nucleotide 34 to detach the guanine base from the RNA, forming a covalent enzyme-RNA intermediate. The proton acceptor active site deprotonates the incoming PreQ1, allowing a nucleophilic attack on the C1' of the ribose to form the product. After dissociation, two additional enzymatic reactions on the tRNA convert PreQ1 to queuine (Q), resulting in the hypermodified nucleoside queuosine (7-(((4,5-cis-dihydroxy-2-cyclopenten-1-yl)amino)methyl)-7-deazaguanosine).</text>
</comment>
<comment type="catalytic activity">
    <reaction evidence="1">
        <text>7-aminomethyl-7-carbaguanine + guanosine(34) in tRNA = 7-aminomethyl-7-carbaguanosine(34) in tRNA + guanine</text>
        <dbReference type="Rhea" id="RHEA:24104"/>
        <dbReference type="Rhea" id="RHEA-COMP:10341"/>
        <dbReference type="Rhea" id="RHEA-COMP:10342"/>
        <dbReference type="ChEBI" id="CHEBI:16235"/>
        <dbReference type="ChEBI" id="CHEBI:58703"/>
        <dbReference type="ChEBI" id="CHEBI:74269"/>
        <dbReference type="ChEBI" id="CHEBI:82833"/>
        <dbReference type="EC" id="2.4.2.29"/>
    </reaction>
</comment>
<comment type="cofactor">
    <cofactor evidence="1">
        <name>Zn(2+)</name>
        <dbReference type="ChEBI" id="CHEBI:29105"/>
    </cofactor>
    <text evidence="1">Binds 1 zinc ion per subunit.</text>
</comment>
<comment type="pathway">
    <text evidence="1">tRNA modification; tRNA-queuosine biosynthesis.</text>
</comment>
<comment type="subunit">
    <text evidence="1">Homodimer. Within each dimer, one monomer is responsible for RNA recognition and catalysis, while the other monomer binds to the replacement base PreQ1.</text>
</comment>
<comment type="similarity">
    <text evidence="1">Belongs to the queuine tRNA-ribosyltransferase family.</text>
</comment>
<accession>Q822U8</accession>
<gene>
    <name evidence="1" type="primary">tgt</name>
    <name type="ordered locus">CCA_00581</name>
</gene>
<evidence type="ECO:0000255" key="1">
    <source>
        <dbReference type="HAMAP-Rule" id="MF_00168"/>
    </source>
</evidence>
<feature type="chain" id="PRO_0000135463" description="Queuine tRNA-ribosyltransferase">
    <location>
        <begin position="1"/>
        <end position="372"/>
    </location>
</feature>
<feature type="region of interest" description="RNA binding" evidence="1">
    <location>
        <begin position="262"/>
        <end position="268"/>
    </location>
</feature>
<feature type="region of interest" description="RNA binding; important for wobble base 34 recognition" evidence="1">
    <location>
        <begin position="286"/>
        <end position="290"/>
    </location>
</feature>
<feature type="active site" description="Proton acceptor" evidence="1">
    <location>
        <position position="89"/>
    </location>
</feature>
<feature type="active site" description="Nucleophile" evidence="1">
    <location>
        <position position="281"/>
    </location>
</feature>
<feature type="binding site" evidence="1">
    <location>
        <begin position="89"/>
        <end position="93"/>
    </location>
    <ligand>
        <name>substrate</name>
    </ligand>
</feature>
<feature type="binding site" evidence="1">
    <location>
        <position position="161"/>
    </location>
    <ligand>
        <name>substrate</name>
    </ligand>
</feature>
<feature type="binding site" evidence="1">
    <location>
        <position position="232"/>
    </location>
    <ligand>
        <name>substrate</name>
    </ligand>
</feature>
<feature type="binding site" evidence="1">
    <location>
        <position position="319"/>
    </location>
    <ligand>
        <name>Zn(2+)</name>
        <dbReference type="ChEBI" id="CHEBI:29105"/>
    </ligand>
</feature>
<feature type="binding site" evidence="1">
    <location>
        <position position="321"/>
    </location>
    <ligand>
        <name>Zn(2+)</name>
        <dbReference type="ChEBI" id="CHEBI:29105"/>
    </ligand>
</feature>
<feature type="binding site" evidence="1">
    <location>
        <position position="324"/>
    </location>
    <ligand>
        <name>Zn(2+)</name>
        <dbReference type="ChEBI" id="CHEBI:29105"/>
    </ligand>
</feature>
<feature type="binding site" evidence="1">
    <location>
        <position position="351"/>
    </location>
    <ligand>
        <name>Zn(2+)</name>
        <dbReference type="ChEBI" id="CHEBI:29105"/>
    </ligand>
</feature>
<keyword id="KW-0328">Glycosyltransferase</keyword>
<keyword id="KW-0479">Metal-binding</keyword>
<keyword id="KW-0671">Queuosine biosynthesis</keyword>
<keyword id="KW-0808">Transferase</keyword>
<keyword id="KW-0819">tRNA processing</keyword>
<keyword id="KW-0862">Zinc</keyword>
<sequence>MALKFHVLHQSKKSRARVGKIETAHGIIDTPAFVPVATNGALKGVIDHSNIPLMFCNTYHLLVHPGTEAIAAMGGLHKFMNRNAPIITDSGGFQIFSLAYGSVAEEIKSRGKKKGSSSILEVNDEGVWFKSYRDGHKLFLSPEVSVQAQKDLGADIIIPLDELLPFHSDEKYFLSSCSRTYVWEKRSLDYHKKDPRHQSMYGVIHGGIDPEQRKIGCQFVEDHPFDGFAIGGSLGRNLQEMLPVVDVTTSYLSKDRPVHLLGIGDLPSIHATVGLGIDSFDSSYPTKAARHGLILSSQGPIKIANQAYANDLSSLDPECTCATCTSNISRAYLRHLFKVHEPNAAIWASIHNLHYMQEVMKNIREQILNDEI</sequence>
<proteinExistence type="inferred from homology"/>
<dbReference type="EC" id="2.4.2.29" evidence="1"/>
<dbReference type="EMBL" id="AE015925">
    <property type="protein sequence ID" value="AAP05323.1"/>
    <property type="molecule type" value="Genomic_DNA"/>
</dbReference>
<dbReference type="RefSeq" id="WP_011006538.1">
    <property type="nucleotide sequence ID" value="NC_003361.3"/>
</dbReference>
<dbReference type="SMR" id="Q822U8"/>
<dbReference type="STRING" id="227941.CCA_00581"/>
<dbReference type="KEGG" id="cca:CCA_00581"/>
<dbReference type="eggNOG" id="COG0343">
    <property type="taxonomic scope" value="Bacteria"/>
</dbReference>
<dbReference type="HOGENOM" id="CLU_022060_0_2_0"/>
<dbReference type="OrthoDB" id="9805417at2"/>
<dbReference type="UniPathway" id="UPA00392"/>
<dbReference type="Proteomes" id="UP000002193">
    <property type="component" value="Chromosome"/>
</dbReference>
<dbReference type="GO" id="GO:0046872">
    <property type="term" value="F:metal ion binding"/>
    <property type="evidence" value="ECO:0007669"/>
    <property type="project" value="UniProtKB-KW"/>
</dbReference>
<dbReference type="GO" id="GO:0008479">
    <property type="term" value="F:tRNA-guanosine(34) queuine transglycosylase activity"/>
    <property type="evidence" value="ECO:0007669"/>
    <property type="project" value="UniProtKB-UniRule"/>
</dbReference>
<dbReference type="GO" id="GO:0008616">
    <property type="term" value="P:queuosine biosynthetic process"/>
    <property type="evidence" value="ECO:0007669"/>
    <property type="project" value="UniProtKB-UniRule"/>
</dbReference>
<dbReference type="GO" id="GO:0101030">
    <property type="term" value="P:tRNA-guanine transglycosylation"/>
    <property type="evidence" value="ECO:0007669"/>
    <property type="project" value="InterPro"/>
</dbReference>
<dbReference type="Gene3D" id="3.20.20.105">
    <property type="entry name" value="Queuine tRNA-ribosyltransferase-like"/>
    <property type="match status" value="1"/>
</dbReference>
<dbReference type="HAMAP" id="MF_00168">
    <property type="entry name" value="Q_tRNA_Tgt"/>
    <property type="match status" value="1"/>
</dbReference>
<dbReference type="InterPro" id="IPR004803">
    <property type="entry name" value="TGT"/>
</dbReference>
<dbReference type="InterPro" id="IPR036511">
    <property type="entry name" value="TGT-like_sf"/>
</dbReference>
<dbReference type="InterPro" id="IPR002616">
    <property type="entry name" value="tRNA_ribo_trans-like"/>
</dbReference>
<dbReference type="NCBIfam" id="TIGR00430">
    <property type="entry name" value="Q_tRNA_tgt"/>
    <property type="match status" value="1"/>
</dbReference>
<dbReference type="NCBIfam" id="TIGR00449">
    <property type="entry name" value="tgt_general"/>
    <property type="match status" value="1"/>
</dbReference>
<dbReference type="PANTHER" id="PTHR43468">
    <property type="match status" value="1"/>
</dbReference>
<dbReference type="PANTHER" id="PTHR43468:SF1">
    <property type="entry name" value="TRNA-GUANOSINE(34) QUEUINE TRANSGLYCOSYLASE"/>
    <property type="match status" value="1"/>
</dbReference>
<dbReference type="Pfam" id="PF01702">
    <property type="entry name" value="TGT"/>
    <property type="match status" value="1"/>
</dbReference>
<dbReference type="SUPFAM" id="SSF51713">
    <property type="entry name" value="tRNA-guanine transglycosylase"/>
    <property type="match status" value="1"/>
</dbReference>
<protein>
    <recommendedName>
        <fullName evidence="1">Queuine tRNA-ribosyltransferase</fullName>
        <ecNumber evidence="1">2.4.2.29</ecNumber>
    </recommendedName>
    <alternativeName>
        <fullName evidence="1">Guanine insertion enzyme</fullName>
    </alternativeName>
    <alternativeName>
        <fullName evidence="1">tRNA-guanine transglycosylase</fullName>
    </alternativeName>
</protein>
<reference key="1">
    <citation type="journal article" date="2003" name="Nucleic Acids Res.">
        <title>Genome sequence of Chlamydophila caviae (Chlamydia psittaci GPIC): examining the role of niche-specific genes in the evolution of the Chlamydiaceae.</title>
        <authorList>
            <person name="Read T.D."/>
            <person name="Myers G.S.A."/>
            <person name="Brunham R.C."/>
            <person name="Nelson W.C."/>
            <person name="Paulsen I.T."/>
            <person name="Heidelberg J.F."/>
            <person name="Holtzapple E.K."/>
            <person name="Khouri H.M."/>
            <person name="Federova N.B."/>
            <person name="Carty H.A."/>
            <person name="Umayam L.A."/>
            <person name="Haft D.H."/>
            <person name="Peterson J.D."/>
            <person name="Beanan M.J."/>
            <person name="White O."/>
            <person name="Salzberg S.L."/>
            <person name="Hsia R.-C."/>
            <person name="McClarty G."/>
            <person name="Rank R.G."/>
            <person name="Bavoil P.M."/>
            <person name="Fraser C.M."/>
        </authorList>
    </citation>
    <scope>NUCLEOTIDE SEQUENCE [LARGE SCALE GENOMIC DNA]</scope>
    <source>
        <strain>ATCC VR-813 / DSM 19441 / 03DC25 / GPIC</strain>
    </source>
</reference>